<sequence length="102" mass="11044">MEIGLTHYLTVGAILFGLGAFGILMNRRNVIVLLMAIELMLLAVNINLVAFSVFLNDLTGQVFTLFILTVAAAEAAIGLAILVVYFRNRGTIAVEDINMMKG</sequence>
<organism>
    <name type="scientific">Rhodospirillum centenum (strain ATCC 51521 / SW)</name>
    <dbReference type="NCBI Taxonomy" id="414684"/>
    <lineage>
        <taxon>Bacteria</taxon>
        <taxon>Pseudomonadati</taxon>
        <taxon>Pseudomonadota</taxon>
        <taxon>Alphaproteobacteria</taxon>
        <taxon>Rhodospirillales</taxon>
        <taxon>Rhodospirillaceae</taxon>
        <taxon>Rhodospirillum</taxon>
    </lineage>
</organism>
<feature type="chain" id="PRO_0000390210" description="NADH-quinone oxidoreductase subunit K">
    <location>
        <begin position="1"/>
        <end position="102"/>
    </location>
</feature>
<feature type="transmembrane region" description="Helical" evidence="1">
    <location>
        <begin position="3"/>
        <end position="23"/>
    </location>
</feature>
<feature type="transmembrane region" description="Helical" evidence="1">
    <location>
        <begin position="31"/>
        <end position="51"/>
    </location>
</feature>
<feature type="transmembrane region" description="Helical" evidence="1">
    <location>
        <begin position="66"/>
        <end position="86"/>
    </location>
</feature>
<dbReference type="EC" id="7.1.1.-" evidence="1"/>
<dbReference type="EMBL" id="CP000613">
    <property type="protein sequence ID" value="ACI98642.1"/>
    <property type="molecule type" value="Genomic_DNA"/>
</dbReference>
<dbReference type="RefSeq" id="WP_012566430.1">
    <property type="nucleotide sequence ID" value="NC_011420.2"/>
</dbReference>
<dbReference type="SMR" id="B6ISX1"/>
<dbReference type="STRING" id="414684.RC1_1230"/>
<dbReference type="KEGG" id="rce:RC1_1230"/>
<dbReference type="eggNOG" id="COG0713">
    <property type="taxonomic scope" value="Bacteria"/>
</dbReference>
<dbReference type="HOGENOM" id="CLU_144724_2_0_5"/>
<dbReference type="OrthoDB" id="9811124at2"/>
<dbReference type="Proteomes" id="UP000001591">
    <property type="component" value="Chromosome"/>
</dbReference>
<dbReference type="GO" id="GO:0030964">
    <property type="term" value="C:NADH dehydrogenase complex"/>
    <property type="evidence" value="ECO:0007669"/>
    <property type="project" value="TreeGrafter"/>
</dbReference>
<dbReference type="GO" id="GO:0005886">
    <property type="term" value="C:plasma membrane"/>
    <property type="evidence" value="ECO:0007669"/>
    <property type="project" value="UniProtKB-SubCell"/>
</dbReference>
<dbReference type="GO" id="GO:0050136">
    <property type="term" value="F:NADH:ubiquinone reductase (non-electrogenic) activity"/>
    <property type="evidence" value="ECO:0007669"/>
    <property type="project" value="UniProtKB-UniRule"/>
</dbReference>
<dbReference type="GO" id="GO:0048038">
    <property type="term" value="F:quinone binding"/>
    <property type="evidence" value="ECO:0007669"/>
    <property type="project" value="UniProtKB-KW"/>
</dbReference>
<dbReference type="GO" id="GO:0042773">
    <property type="term" value="P:ATP synthesis coupled electron transport"/>
    <property type="evidence" value="ECO:0007669"/>
    <property type="project" value="InterPro"/>
</dbReference>
<dbReference type="FunFam" id="1.10.287.3510:FF:000001">
    <property type="entry name" value="NADH-quinone oxidoreductase subunit K"/>
    <property type="match status" value="1"/>
</dbReference>
<dbReference type="Gene3D" id="1.10.287.3510">
    <property type="match status" value="1"/>
</dbReference>
<dbReference type="HAMAP" id="MF_01456">
    <property type="entry name" value="NDH1_NuoK"/>
    <property type="match status" value="1"/>
</dbReference>
<dbReference type="InterPro" id="IPR001133">
    <property type="entry name" value="NADH_UbQ_OxRdtase_chain4L/K"/>
</dbReference>
<dbReference type="InterPro" id="IPR039428">
    <property type="entry name" value="NUOK/Mnh_C1-like"/>
</dbReference>
<dbReference type="NCBIfam" id="NF004320">
    <property type="entry name" value="PRK05715.1-2"/>
    <property type="match status" value="1"/>
</dbReference>
<dbReference type="NCBIfam" id="NF004321">
    <property type="entry name" value="PRK05715.1-3"/>
    <property type="match status" value="1"/>
</dbReference>
<dbReference type="NCBIfam" id="NF004323">
    <property type="entry name" value="PRK05715.1-5"/>
    <property type="match status" value="1"/>
</dbReference>
<dbReference type="PANTHER" id="PTHR11434:SF21">
    <property type="entry name" value="NADH DEHYDROGENASE SUBUNIT 4L-RELATED"/>
    <property type="match status" value="1"/>
</dbReference>
<dbReference type="PANTHER" id="PTHR11434">
    <property type="entry name" value="NADH-UBIQUINONE OXIDOREDUCTASE SUBUNIT ND4L"/>
    <property type="match status" value="1"/>
</dbReference>
<dbReference type="Pfam" id="PF00420">
    <property type="entry name" value="Oxidored_q2"/>
    <property type="match status" value="1"/>
</dbReference>
<comment type="function">
    <text evidence="1">NDH-1 shuttles electrons from NADH, via FMN and iron-sulfur (Fe-S) centers, to quinones in the respiratory chain. The immediate electron acceptor for the enzyme in this species is believed to be ubiquinone. Couples the redox reaction to proton translocation (for every two electrons transferred, four hydrogen ions are translocated across the cytoplasmic membrane), and thus conserves the redox energy in a proton gradient.</text>
</comment>
<comment type="catalytic activity">
    <reaction evidence="1">
        <text>a quinone + NADH + 5 H(+)(in) = a quinol + NAD(+) + 4 H(+)(out)</text>
        <dbReference type="Rhea" id="RHEA:57888"/>
        <dbReference type="ChEBI" id="CHEBI:15378"/>
        <dbReference type="ChEBI" id="CHEBI:24646"/>
        <dbReference type="ChEBI" id="CHEBI:57540"/>
        <dbReference type="ChEBI" id="CHEBI:57945"/>
        <dbReference type="ChEBI" id="CHEBI:132124"/>
    </reaction>
</comment>
<comment type="subunit">
    <text evidence="1">NDH-1 is composed of 14 different subunits. Subunits NuoA, H, J, K, L, M, N constitute the membrane sector of the complex.</text>
</comment>
<comment type="subcellular location">
    <subcellularLocation>
        <location evidence="1">Cell inner membrane</location>
        <topology evidence="1">Multi-pass membrane protein</topology>
    </subcellularLocation>
</comment>
<comment type="similarity">
    <text evidence="1">Belongs to the complex I subunit 4L family.</text>
</comment>
<protein>
    <recommendedName>
        <fullName evidence="1">NADH-quinone oxidoreductase subunit K</fullName>
        <ecNumber evidence="1">7.1.1.-</ecNumber>
    </recommendedName>
    <alternativeName>
        <fullName evidence="1">NADH dehydrogenase I subunit K</fullName>
    </alternativeName>
    <alternativeName>
        <fullName evidence="1">NDH-1 subunit K</fullName>
    </alternativeName>
</protein>
<accession>B6ISX1</accession>
<proteinExistence type="inferred from homology"/>
<evidence type="ECO:0000255" key="1">
    <source>
        <dbReference type="HAMAP-Rule" id="MF_01456"/>
    </source>
</evidence>
<gene>
    <name evidence="1" type="primary">nuoK</name>
    <name type="ordered locus">RC1_1230</name>
</gene>
<name>NUOK_RHOCS</name>
<reference key="1">
    <citation type="submission" date="2007-03" db="EMBL/GenBank/DDBJ databases">
        <title>Genome sequence of Rhodospirillum centenum.</title>
        <authorList>
            <person name="Touchman J.W."/>
            <person name="Bauer C."/>
            <person name="Blankenship R.E."/>
        </authorList>
    </citation>
    <scope>NUCLEOTIDE SEQUENCE [LARGE SCALE GENOMIC DNA]</scope>
    <source>
        <strain>ATCC 51521 / SW</strain>
    </source>
</reference>
<keyword id="KW-0997">Cell inner membrane</keyword>
<keyword id="KW-1003">Cell membrane</keyword>
<keyword id="KW-0472">Membrane</keyword>
<keyword id="KW-0520">NAD</keyword>
<keyword id="KW-0874">Quinone</keyword>
<keyword id="KW-1185">Reference proteome</keyword>
<keyword id="KW-1278">Translocase</keyword>
<keyword id="KW-0812">Transmembrane</keyword>
<keyword id="KW-1133">Transmembrane helix</keyword>
<keyword id="KW-0813">Transport</keyword>
<keyword id="KW-0830">Ubiquinone</keyword>